<proteinExistence type="inferred from homology"/>
<protein>
    <recommendedName>
        <fullName evidence="1">Nucleotide-binding protein Teth514_1178</fullName>
    </recommendedName>
</protein>
<evidence type="ECO:0000255" key="1">
    <source>
        <dbReference type="HAMAP-Rule" id="MF_00636"/>
    </source>
</evidence>
<comment type="function">
    <text evidence="1">Displays ATPase and GTPase activities.</text>
</comment>
<comment type="similarity">
    <text evidence="1">Belongs to the RapZ-like family.</text>
</comment>
<feature type="chain" id="PRO_1000130793" description="Nucleotide-binding protein Teth514_1178">
    <location>
        <begin position="1"/>
        <end position="284"/>
    </location>
</feature>
<feature type="binding site" evidence="1">
    <location>
        <begin position="8"/>
        <end position="15"/>
    </location>
    <ligand>
        <name>ATP</name>
        <dbReference type="ChEBI" id="CHEBI:30616"/>
    </ligand>
</feature>
<feature type="binding site" evidence="1">
    <location>
        <begin position="58"/>
        <end position="61"/>
    </location>
    <ligand>
        <name>GTP</name>
        <dbReference type="ChEBI" id="CHEBI:37565"/>
    </ligand>
</feature>
<name>Y1178_THEPX</name>
<gene>
    <name type="ordered locus">Teth514_1178</name>
</gene>
<organism>
    <name type="scientific">Thermoanaerobacter sp. (strain X514)</name>
    <dbReference type="NCBI Taxonomy" id="399726"/>
    <lineage>
        <taxon>Bacteria</taxon>
        <taxon>Bacillati</taxon>
        <taxon>Bacillota</taxon>
        <taxon>Clostridia</taxon>
        <taxon>Thermoanaerobacterales</taxon>
        <taxon>Thermoanaerobacteraceae</taxon>
        <taxon>Thermoanaerobacter</taxon>
    </lineage>
</organism>
<sequence length="284" mass="32719">MRFVIITGLSGAGKTQALKAMEDMGFFCIDNFPPALLPKLADLFYHSKNVDKVALGMDLRGGQFFEDIYSSLEFLKKNNYDYEIVFLEASDEVLIKRFKETRRKHPLSEEGRIVDGINEERKRLAEIRKIANSIIDTSNLTSSQLKEELSNIFLKGKKFKGIIIDIMSFGYKYGIPLDADLVFDVRFLPNPFYIEELRPLTGNDDKVKEYVMKWEEAKEFLKKLGDMIKFLIPYYIREGKSQLVIAIGCTGGKHRSVTIANALYEFLKKEDYSVILHHRDIGEE</sequence>
<dbReference type="EMBL" id="CP000923">
    <property type="protein sequence ID" value="ABY92472.1"/>
    <property type="molecule type" value="Genomic_DNA"/>
</dbReference>
<dbReference type="SMR" id="B0K6J6"/>
<dbReference type="KEGG" id="tex:Teth514_1178"/>
<dbReference type="HOGENOM" id="CLU_059558_0_0_9"/>
<dbReference type="Proteomes" id="UP000002155">
    <property type="component" value="Chromosome"/>
</dbReference>
<dbReference type="GO" id="GO:0005524">
    <property type="term" value="F:ATP binding"/>
    <property type="evidence" value="ECO:0007669"/>
    <property type="project" value="UniProtKB-UniRule"/>
</dbReference>
<dbReference type="GO" id="GO:0005525">
    <property type="term" value="F:GTP binding"/>
    <property type="evidence" value="ECO:0007669"/>
    <property type="project" value="UniProtKB-UniRule"/>
</dbReference>
<dbReference type="Gene3D" id="3.40.50.300">
    <property type="entry name" value="P-loop containing nucleotide triphosphate hydrolases"/>
    <property type="match status" value="1"/>
</dbReference>
<dbReference type="HAMAP" id="MF_00636">
    <property type="entry name" value="RapZ_like"/>
    <property type="match status" value="1"/>
</dbReference>
<dbReference type="InterPro" id="IPR027417">
    <property type="entry name" value="P-loop_NTPase"/>
</dbReference>
<dbReference type="InterPro" id="IPR005337">
    <property type="entry name" value="RapZ-like"/>
</dbReference>
<dbReference type="InterPro" id="IPR053930">
    <property type="entry name" value="RapZ-like_N"/>
</dbReference>
<dbReference type="InterPro" id="IPR053931">
    <property type="entry name" value="RapZ_C"/>
</dbReference>
<dbReference type="NCBIfam" id="NF003828">
    <property type="entry name" value="PRK05416.1"/>
    <property type="match status" value="1"/>
</dbReference>
<dbReference type="PANTHER" id="PTHR30448">
    <property type="entry name" value="RNASE ADAPTER PROTEIN RAPZ"/>
    <property type="match status" value="1"/>
</dbReference>
<dbReference type="PANTHER" id="PTHR30448:SF0">
    <property type="entry name" value="RNASE ADAPTER PROTEIN RAPZ"/>
    <property type="match status" value="1"/>
</dbReference>
<dbReference type="Pfam" id="PF22740">
    <property type="entry name" value="PapZ_C"/>
    <property type="match status" value="1"/>
</dbReference>
<dbReference type="Pfam" id="PF03668">
    <property type="entry name" value="RapZ-like_N"/>
    <property type="match status" value="1"/>
</dbReference>
<dbReference type="PIRSF" id="PIRSF005052">
    <property type="entry name" value="P-loopkin"/>
    <property type="match status" value="1"/>
</dbReference>
<dbReference type="SUPFAM" id="SSF52540">
    <property type="entry name" value="P-loop containing nucleoside triphosphate hydrolases"/>
    <property type="match status" value="1"/>
</dbReference>
<accession>B0K6J6</accession>
<reference key="1">
    <citation type="submission" date="2008-01" db="EMBL/GenBank/DDBJ databases">
        <title>Complete sequence of Thermoanaerobacter sp. X514.</title>
        <authorList>
            <consortium name="US DOE Joint Genome Institute"/>
            <person name="Copeland A."/>
            <person name="Lucas S."/>
            <person name="Lapidus A."/>
            <person name="Barry K."/>
            <person name="Glavina del Rio T."/>
            <person name="Dalin E."/>
            <person name="Tice H."/>
            <person name="Pitluck S."/>
            <person name="Bruce D."/>
            <person name="Goodwin L."/>
            <person name="Saunders E."/>
            <person name="Brettin T."/>
            <person name="Detter J.C."/>
            <person name="Han C."/>
            <person name="Schmutz J."/>
            <person name="Larimer F."/>
            <person name="Land M."/>
            <person name="Hauser L."/>
            <person name="Kyrpides N."/>
            <person name="Kim E."/>
            <person name="Hemme C."/>
            <person name="Fields M.W."/>
            <person name="He Z."/>
            <person name="Zhou J."/>
            <person name="Richardson P."/>
        </authorList>
    </citation>
    <scope>NUCLEOTIDE SEQUENCE [LARGE SCALE GENOMIC DNA]</scope>
    <source>
        <strain>X514</strain>
    </source>
</reference>
<keyword id="KW-0067">ATP-binding</keyword>
<keyword id="KW-0342">GTP-binding</keyword>
<keyword id="KW-0547">Nucleotide-binding</keyword>